<proteinExistence type="evidence at protein level"/>
<sequence>MALSCSTVRPRRRGSALRSKMELLSRAEQEMSLAALKQHDPYITSIADLTGQVALYTFCPKANQWEKTDIEGTLFVYRRSASPYHGFTIVNRLNMHNLVEPVNKDLEFQLHEPFLLYRNASLSIYSIWFYDKNDCHRIAKLMADVVEEETRRSQQAARDKQSPSQANGCSDQRPIDILEMLSRAKDEYERNQMGGSNISSPGLQPSTQLSNLGSTETLEETPSGSQDKSAPSGHKHLTVEELFGTSLPKEQPTAMGLESEDTDKLLGDASQKEPSSFLPFPFEQSGGAPQSENLGIHSAAHHTVQPEVSTPVLITPASIAQSGDKHPPSYTLPLSPVLSPTLPAEAPTTQVPHLPRNSTMIQAVKTTPRQKSPLLNQPVPELSHSSLVASQSPFRAPVSLANPAGTALPSVDLLQKLRLTPQHDQIQAQPLGKGTMAPSFSSAAGQLATPESFIEPSSKTAAARAAVSASLSNMVLAPTLQSMQQNQDPEVFSQPKVLPSAIPIAGSPLVPATTTAVSSVLLSPSVFQQTVPRAADLERKASSPSPLTVGTAESQRKPSIILSKSQLQDTLIHLIKNDSSFLSTLHAVYLQVLTKNKDNHNL</sequence>
<reference key="1">
    <citation type="journal article" date="2002" name="Nat. Cell Biol.">
        <title>SMIF, a Smad4-interacting protein that functions as a co-activator in TGFbeta signalling.</title>
        <authorList>
            <person name="Bai R.-Y."/>
            <person name="Koester C."/>
            <person name="Ouyang T."/>
            <person name="Hahn S.A."/>
            <person name="Hammerschmidt M."/>
            <person name="Peschel C."/>
            <person name="Duyster J."/>
        </authorList>
    </citation>
    <scope>NUCLEOTIDE SEQUENCE [MRNA]</scope>
    <source>
        <strain>Swiss Webster</strain>
    </source>
</reference>
<reference key="2">
    <citation type="journal article" date="2004" name="Genome Res.">
        <title>The status, quality, and expansion of the NIH full-length cDNA project: the Mammalian Gene Collection (MGC).</title>
        <authorList>
            <consortium name="The MGC Project Team"/>
        </authorList>
    </citation>
    <scope>NUCLEOTIDE SEQUENCE [LARGE SCALE MRNA]</scope>
    <scope>VARIANT ARG-481</scope>
    <source>
        <strain>C57BL/6J</strain>
        <tissue>Egg</tissue>
    </source>
</reference>
<reference key="3">
    <citation type="journal article" date="2007" name="Proc. Natl. Acad. Sci. U.S.A.">
        <title>Large-scale phosphorylation analysis of mouse liver.</title>
        <authorList>
            <person name="Villen J."/>
            <person name="Beausoleil S.A."/>
            <person name="Gerber S.A."/>
            <person name="Gygi S.P."/>
        </authorList>
    </citation>
    <scope>PHOSPHORYLATION [LARGE SCALE ANALYSIS] AT SER-543 AND SER-545</scope>
    <scope>IDENTIFICATION BY MASS SPECTROMETRY [LARGE SCALE ANALYSIS]</scope>
    <source>
        <tissue>Liver</tissue>
    </source>
</reference>
<reference key="4">
    <citation type="journal article" date="2009" name="Mol. Cell. Proteomics">
        <title>Large scale localization of protein phosphorylation by use of electron capture dissociation mass spectrometry.</title>
        <authorList>
            <person name="Sweet S.M."/>
            <person name="Bailey C.M."/>
            <person name="Cunningham D.L."/>
            <person name="Heath J.K."/>
            <person name="Cooper H.J."/>
        </authorList>
    </citation>
    <scope>IDENTIFICATION BY MASS SPECTROMETRY [LARGE SCALE ANALYSIS]</scope>
    <source>
        <tissue>Embryonic fibroblast</tissue>
    </source>
</reference>
<reference key="5">
    <citation type="journal article" date="2010" name="Cell">
        <title>A tissue-specific atlas of mouse protein phosphorylation and expression.</title>
        <authorList>
            <person name="Huttlin E.L."/>
            <person name="Jedrychowski M.P."/>
            <person name="Elias J.E."/>
            <person name="Goswami T."/>
            <person name="Rad R."/>
            <person name="Beausoleil S.A."/>
            <person name="Villen J."/>
            <person name="Haas W."/>
            <person name="Sowa M.E."/>
            <person name="Gygi S.P."/>
        </authorList>
    </citation>
    <scope>PHOSPHORYLATION [LARGE SCALE ANALYSIS] AT SER-82; SER-162; SER-199; SER-200; SER-335; SER-339; SER-372; THR-420; SER-542; SER-543; SER-545 AND THR-548</scope>
    <scope>IDENTIFICATION BY MASS SPECTROMETRY [LARGE SCALE ANALYSIS]</scope>
    <source>
        <tissue>Brain</tissue>
        <tissue>Brown adipose tissue</tissue>
        <tissue>Heart</tissue>
        <tissue>Kidney</tissue>
        <tissue>Liver</tissue>
        <tissue>Lung</tissue>
        <tissue>Pancreas</tissue>
        <tissue>Spleen</tissue>
        <tissue>Testis</tissue>
    </source>
</reference>
<reference key="6">
    <citation type="journal article" date="2010" name="Reproduction">
        <title>Functional reconstruction of NANOS3 expression in the germ cell lineage by a novel transgenic reporter reveals distinct subcellular localizations of NANOS3.</title>
        <authorList>
            <person name="Yamaji M."/>
            <person name="Tanaka T."/>
            <person name="Shigeta M."/>
            <person name="Chuma S."/>
            <person name="Saga Y."/>
            <person name="Saitou M."/>
        </authorList>
    </citation>
    <scope>SUBCELLULAR LOCATION</scope>
</reference>
<reference key="7">
    <citation type="journal article" date="2021" name="Biochem. Biophys. Res. Commun.">
        <title>mRNA decapping factor Dcp1a is essential for embryonic growth in mice.</title>
        <authorList>
            <person name="Ibayashi M."/>
            <person name="Aizawa R."/>
            <person name="Tsukamoto S."/>
        </authorList>
    </citation>
    <scope>FUNCTION</scope>
    <scope>DISRUPTION PHENOTYPE</scope>
    <scope>SUBCELLULAR LOCATION</scope>
    <scope>TISSUE SPECIFICITY</scope>
    <scope>DEVELOPMENTAL STAGE</scope>
</reference>
<gene>
    <name type="primary">Dcp1a</name>
    <name type="synonym">Mitc1</name>
    <name type="synonym">Smif</name>
</gene>
<organism>
    <name type="scientific">Mus musculus</name>
    <name type="common">Mouse</name>
    <dbReference type="NCBI Taxonomy" id="10090"/>
    <lineage>
        <taxon>Eukaryota</taxon>
        <taxon>Metazoa</taxon>
        <taxon>Chordata</taxon>
        <taxon>Craniata</taxon>
        <taxon>Vertebrata</taxon>
        <taxon>Euteleostomi</taxon>
        <taxon>Mammalia</taxon>
        <taxon>Eutheria</taxon>
        <taxon>Euarchontoglires</taxon>
        <taxon>Glires</taxon>
        <taxon>Rodentia</taxon>
        <taxon>Myomorpha</taxon>
        <taxon>Muroidea</taxon>
        <taxon>Muridae</taxon>
        <taxon>Murinae</taxon>
        <taxon>Mus</taxon>
        <taxon>Mus</taxon>
    </lineage>
</organism>
<evidence type="ECO:0000250" key="1">
    <source>
        <dbReference type="UniProtKB" id="Q9NPI6"/>
    </source>
</evidence>
<evidence type="ECO:0000256" key="2">
    <source>
        <dbReference type="SAM" id="MobiDB-lite"/>
    </source>
</evidence>
<evidence type="ECO:0000269" key="3">
    <source>
    </source>
</evidence>
<evidence type="ECO:0000269" key="4">
    <source>
    </source>
</evidence>
<evidence type="ECO:0000269" key="5">
    <source>
    </source>
</evidence>
<evidence type="ECO:0000269" key="6">
    <source>
    </source>
</evidence>
<evidence type="ECO:0000305" key="7"/>
<evidence type="ECO:0007744" key="8">
    <source>
    </source>
</evidence>
<evidence type="ECO:0007744" key="9">
    <source>
    </source>
</evidence>
<accession>Q91YD3</accession>
<accession>Q6NZE3</accession>
<comment type="function">
    <text evidence="1 3">Necessary for the degradation of mRNAs, both in normal mRNA turnover and in nonsense-mediated mRNA decay. Removes the 7-methyl guanine cap structure from mRNA molecules, yielding a 5'-phosphorylated mRNA fragment and 7m-GDP. Contributes to the transactivation of target genes after stimulation by TGFB1 (By similarity). Essential for embryonic development (PubMed:11836524).</text>
</comment>
<comment type="catalytic activity">
    <reaction evidence="1">
        <text>a 5'-end (N(7)-methyl 5'-triphosphoguanosine)-ribonucleoside in mRNA + H2O = N(7)-methyl-GDP + a 5'-end phospho-ribonucleoside in mRNA + 2 H(+)</text>
        <dbReference type="Rhea" id="RHEA:67484"/>
        <dbReference type="Rhea" id="RHEA-COMP:15692"/>
        <dbReference type="Rhea" id="RHEA-COMP:17167"/>
        <dbReference type="ChEBI" id="CHEBI:15377"/>
        <dbReference type="ChEBI" id="CHEBI:15378"/>
        <dbReference type="ChEBI" id="CHEBI:63714"/>
        <dbReference type="ChEBI" id="CHEBI:138282"/>
        <dbReference type="ChEBI" id="CHEBI:156461"/>
        <dbReference type="EC" id="3.6.1.62"/>
    </reaction>
    <physiologicalReaction direction="left-to-right" evidence="1">
        <dbReference type="Rhea" id="RHEA:67485"/>
    </physiologicalReaction>
</comment>
<comment type="subunit">
    <text evidence="1">Forms a complex with EDC3, DCP2, DDX6 and EDC4/HEDLS, within this complex directly interacts with EDC3. Part of a cytoplasmic complex containing proteins involved in mRNA decay, including XRN1 and LSM1. Interacts with DCP1B. Interacts with DCP2. Interacts with DDX17 in an RNA-independent manner. Interacts with PNRC2. Interacts with SMAD4. Interacts with UPF1. Interacts with ZC3HAV1. Interacts with ZFP36L1. Interacts with NBDY. Interacts with DHX34; the interaction is RNA-independent (By similarity).</text>
</comment>
<comment type="subcellular location">
    <subcellularLocation>
        <location evidence="5 6">Cytoplasm</location>
        <location evidence="5 6">P-body</location>
    </subcellularLocation>
    <subcellularLocation>
        <location evidence="1">Nucleus</location>
    </subcellularLocation>
    <text evidence="1 5">Predominantly cytoplasmic, in processing bodies (PB). Nuclear, after TGFB1 treatment. Translocation to the nucleus depends on interaction with SMAD4 (By similarity). Colocalizes with NANOS3 in the processing bodies (PubMed:19861488).</text>
</comment>
<comment type="tissue specificity">
    <text evidence="6">Ubiquitous, with highest expression in the spleen and testis (at protein level).</text>
</comment>
<comment type="developmental stage">
    <text evidence="6">Expression detectable at 9.5 dpc and progressively increases from 11.5 dpc onwards (at protein level).</text>
</comment>
<comment type="disruption phenotype">
    <text evidence="6">Embryonic lethality around embryonic day 10.5 concomitant with massive growth retardation and cardiac developmental defects seen.</text>
</comment>
<comment type="similarity">
    <text evidence="7">Belongs to the DCP1 family.</text>
</comment>
<comment type="caution">
    <text evidence="7">It is uncertain whether Met-1 or Met-21 is the initiator.</text>
</comment>
<dbReference type="EC" id="3.6.1.62" evidence="1"/>
<dbReference type="EMBL" id="AJ344447">
    <property type="protein sequence ID" value="CAC69875.1"/>
    <property type="molecule type" value="mRNA"/>
</dbReference>
<dbReference type="EMBL" id="BC066173">
    <property type="protein sequence ID" value="AAH66173.1"/>
    <property type="molecule type" value="mRNA"/>
</dbReference>
<dbReference type="RefSeq" id="NP_598522.3">
    <property type="nucleotide sequence ID" value="NM_133761.3"/>
</dbReference>
<dbReference type="SMR" id="Q91YD3"/>
<dbReference type="BioGRID" id="217832">
    <property type="interactions" value="4"/>
</dbReference>
<dbReference type="FunCoup" id="Q91YD3">
    <property type="interactions" value="2902"/>
</dbReference>
<dbReference type="IntAct" id="Q91YD3">
    <property type="interactions" value="6"/>
</dbReference>
<dbReference type="MINT" id="Q91YD3"/>
<dbReference type="STRING" id="10090.ENSMUSP00000022535"/>
<dbReference type="GlyGen" id="Q91YD3">
    <property type="glycosylation" value="7 sites, 1 N-linked glycan (1 site), 1 O-linked glycan (6 sites)"/>
</dbReference>
<dbReference type="iPTMnet" id="Q91YD3"/>
<dbReference type="PhosphoSitePlus" id="Q91YD3"/>
<dbReference type="jPOST" id="Q91YD3"/>
<dbReference type="PaxDb" id="10090-ENSMUSP00000022535"/>
<dbReference type="PeptideAtlas" id="Q91YD3"/>
<dbReference type="ProteomicsDB" id="279315"/>
<dbReference type="Pumba" id="Q91YD3"/>
<dbReference type="Antibodypedia" id="73473">
    <property type="antibodies" value="382 antibodies from 33 providers"/>
</dbReference>
<dbReference type="DNASU" id="75901"/>
<dbReference type="Ensembl" id="ENSMUST00000022535.9">
    <property type="protein sequence ID" value="ENSMUSP00000022535.8"/>
    <property type="gene ID" value="ENSMUSG00000021962.10"/>
</dbReference>
<dbReference type="Ensembl" id="ENSMUST00000225196.2">
    <property type="protein sequence ID" value="ENSMUSP00000152897.2"/>
    <property type="gene ID" value="ENSMUSG00000021962.10"/>
</dbReference>
<dbReference type="GeneID" id="75901"/>
<dbReference type="KEGG" id="mmu:75901"/>
<dbReference type="UCSC" id="uc007sva.1">
    <property type="organism name" value="mouse"/>
</dbReference>
<dbReference type="AGR" id="MGI:1923151"/>
<dbReference type="CTD" id="55802"/>
<dbReference type="MGI" id="MGI:1923151">
    <property type="gene designation" value="Dcp1a"/>
</dbReference>
<dbReference type="VEuPathDB" id="HostDB:ENSMUSG00000021962"/>
<dbReference type="eggNOG" id="KOG2868">
    <property type="taxonomic scope" value="Eukaryota"/>
</dbReference>
<dbReference type="GeneTree" id="ENSGT00940000158818"/>
<dbReference type="HOGENOM" id="CLU_030030_0_0_1"/>
<dbReference type="InParanoid" id="Q91YD3"/>
<dbReference type="OMA" id="SASRFKM"/>
<dbReference type="OrthoDB" id="440673at2759"/>
<dbReference type="PhylomeDB" id="Q91YD3"/>
<dbReference type="TreeFam" id="TF320504"/>
<dbReference type="Reactome" id="R-MMU-430039">
    <property type="pathway name" value="mRNA decay by 5' to 3' exoribonuclease"/>
</dbReference>
<dbReference type="Reactome" id="R-MMU-450385">
    <property type="pathway name" value="Butyrate Response Factor 1 (BRF1) binds and destabilizes mRNA"/>
</dbReference>
<dbReference type="Reactome" id="R-MMU-450513">
    <property type="pathway name" value="Tristetraprolin (TTP, ZFP36) binds and destabilizes mRNA"/>
</dbReference>
<dbReference type="Reactome" id="R-MMU-975957">
    <property type="pathway name" value="Nonsense Mediated Decay (NMD) enhanced by the Exon Junction Complex (EJC)"/>
</dbReference>
<dbReference type="BioGRID-ORCS" id="75901">
    <property type="hits" value="19 hits in 78 CRISPR screens"/>
</dbReference>
<dbReference type="ChiTaRS" id="Dcp1a">
    <property type="organism name" value="mouse"/>
</dbReference>
<dbReference type="PRO" id="PR:Q91YD3"/>
<dbReference type="Proteomes" id="UP000000589">
    <property type="component" value="Chromosome 14"/>
</dbReference>
<dbReference type="RNAct" id="Q91YD3">
    <property type="molecule type" value="protein"/>
</dbReference>
<dbReference type="Bgee" id="ENSMUSG00000021962">
    <property type="expression patterns" value="Expressed in secondary oocyte and 243 other cell types or tissues"/>
</dbReference>
<dbReference type="ExpressionAtlas" id="Q91YD3">
    <property type="expression patterns" value="baseline and differential"/>
</dbReference>
<dbReference type="GO" id="GO:0005737">
    <property type="term" value="C:cytoplasm"/>
    <property type="evidence" value="ECO:0000247"/>
    <property type="project" value="MGI"/>
</dbReference>
<dbReference type="GO" id="GO:0030425">
    <property type="term" value="C:dendrite"/>
    <property type="evidence" value="ECO:0007669"/>
    <property type="project" value="Ensembl"/>
</dbReference>
<dbReference type="GO" id="GO:0005634">
    <property type="term" value="C:nucleus"/>
    <property type="evidence" value="ECO:0007669"/>
    <property type="project" value="UniProtKB-SubCell"/>
</dbReference>
<dbReference type="GO" id="GO:0000932">
    <property type="term" value="C:P-body"/>
    <property type="evidence" value="ECO:0000314"/>
    <property type="project" value="UniProtKB"/>
</dbReference>
<dbReference type="GO" id="GO:0005667">
    <property type="term" value="C:transcription regulator complex"/>
    <property type="evidence" value="ECO:0000247"/>
    <property type="project" value="MGI"/>
</dbReference>
<dbReference type="GO" id="GO:0140933">
    <property type="term" value="F:5'-(N(7)-methylguanosine 5'-triphospho)-[mRNA] hydrolase activity"/>
    <property type="evidence" value="ECO:0007669"/>
    <property type="project" value="RHEA"/>
</dbReference>
<dbReference type="GO" id="GO:0008047">
    <property type="term" value="F:enzyme activator activity"/>
    <property type="evidence" value="ECO:0007669"/>
    <property type="project" value="InterPro"/>
</dbReference>
<dbReference type="GO" id="GO:0042802">
    <property type="term" value="F:identical protein binding"/>
    <property type="evidence" value="ECO:0007669"/>
    <property type="project" value="Ensembl"/>
</dbReference>
<dbReference type="GO" id="GO:0019894">
    <property type="term" value="F:kinesin binding"/>
    <property type="evidence" value="ECO:0007669"/>
    <property type="project" value="Ensembl"/>
</dbReference>
<dbReference type="GO" id="GO:0000290">
    <property type="term" value="P:deadenylation-dependent decapping of nuclear-transcribed mRNA"/>
    <property type="evidence" value="ECO:0007669"/>
    <property type="project" value="InterPro"/>
</dbReference>
<dbReference type="GO" id="GO:0000184">
    <property type="term" value="P:nuclear-transcribed mRNA catabolic process, nonsense-mediated decay"/>
    <property type="evidence" value="ECO:0007669"/>
    <property type="project" value="UniProtKB-KW"/>
</dbReference>
<dbReference type="GO" id="GO:0045893">
    <property type="term" value="P:positive regulation of DNA-templated transcription"/>
    <property type="evidence" value="ECO:0000247"/>
    <property type="project" value="MGI"/>
</dbReference>
<dbReference type="GO" id="GO:1903608">
    <property type="term" value="P:protein localization to cytoplasmic stress granule"/>
    <property type="evidence" value="ECO:0007669"/>
    <property type="project" value="Ensembl"/>
</dbReference>
<dbReference type="GO" id="GO:0007179">
    <property type="term" value="P:transforming growth factor beta receptor signaling pathway"/>
    <property type="evidence" value="ECO:0000247"/>
    <property type="project" value="MGI"/>
</dbReference>
<dbReference type="CDD" id="cd09804">
    <property type="entry name" value="Dcp1"/>
    <property type="match status" value="1"/>
</dbReference>
<dbReference type="FunFam" id="2.30.29.30:FF:000097">
    <property type="entry name" value="Putative mRNA-decapping enzyme 1A"/>
    <property type="match status" value="1"/>
</dbReference>
<dbReference type="Gene3D" id="6.10.140.2030">
    <property type="match status" value="1"/>
</dbReference>
<dbReference type="Gene3D" id="2.30.29.30">
    <property type="entry name" value="Pleckstrin-homology domain (PH domain)/Phosphotyrosine-binding domain (PTB)"/>
    <property type="match status" value="1"/>
</dbReference>
<dbReference type="InterPro" id="IPR010334">
    <property type="entry name" value="Dcp1"/>
</dbReference>
<dbReference type="InterPro" id="IPR031953">
    <property type="entry name" value="mRNA_decap_C"/>
</dbReference>
<dbReference type="InterPro" id="IPR011993">
    <property type="entry name" value="PH-like_dom_sf"/>
</dbReference>
<dbReference type="PANTHER" id="PTHR16290:SF4">
    <property type="entry name" value="MRNA-DECAPPING ENZYME 1A"/>
    <property type="match status" value="1"/>
</dbReference>
<dbReference type="PANTHER" id="PTHR16290">
    <property type="entry name" value="TRANSCRIPTION FACTOR SMIF DECAPPING ENZYME DCP1"/>
    <property type="match status" value="1"/>
</dbReference>
<dbReference type="Pfam" id="PF06058">
    <property type="entry name" value="DCP1"/>
    <property type="match status" value="1"/>
</dbReference>
<dbReference type="Pfam" id="PF16741">
    <property type="entry name" value="mRNA_decap_C"/>
    <property type="match status" value="1"/>
</dbReference>
<dbReference type="SUPFAM" id="SSF50729">
    <property type="entry name" value="PH domain-like"/>
    <property type="match status" value="1"/>
</dbReference>
<feature type="chain" id="PRO_0000189633" description="mRNA-decapping enzyme 1A">
    <location>
        <begin position="1"/>
        <end position="602"/>
    </location>
</feature>
<feature type="region of interest" description="Disordered" evidence="2">
    <location>
        <begin position="152"/>
        <end position="174"/>
    </location>
</feature>
<feature type="region of interest" description="Disordered" evidence="2">
    <location>
        <begin position="191"/>
        <end position="234"/>
    </location>
</feature>
<feature type="region of interest" description="Disordered" evidence="2">
    <location>
        <begin position="267"/>
        <end position="291"/>
    </location>
</feature>
<feature type="compositionally biased region" description="Basic and acidic residues" evidence="2">
    <location>
        <begin position="152"/>
        <end position="161"/>
    </location>
</feature>
<feature type="compositionally biased region" description="Polar residues" evidence="2">
    <location>
        <begin position="193"/>
        <end position="229"/>
    </location>
</feature>
<feature type="modified residue" description="Phosphoserine" evidence="9">
    <location>
        <position position="82"/>
    </location>
</feature>
<feature type="modified residue" description="Phosphoserine" evidence="9">
    <location>
        <position position="162"/>
    </location>
</feature>
<feature type="modified residue" description="Phosphoserine" evidence="9">
    <location>
        <position position="199"/>
    </location>
</feature>
<feature type="modified residue" description="Phosphoserine" evidence="9">
    <location>
        <position position="200"/>
    </location>
</feature>
<feature type="modified residue" description="Phosphoserine" evidence="9">
    <location>
        <position position="335"/>
    </location>
</feature>
<feature type="modified residue" description="Phosphoserine" evidence="9">
    <location>
        <position position="339"/>
    </location>
</feature>
<feature type="modified residue" description="Phosphothreonine" evidence="1">
    <location>
        <position position="367"/>
    </location>
</feature>
<feature type="modified residue" description="Phosphoserine" evidence="9">
    <location>
        <position position="372"/>
    </location>
</feature>
<feature type="modified residue" description="Asymmetric dimethylarginine" evidence="1">
    <location>
        <position position="395"/>
    </location>
</feature>
<feature type="modified residue" description="Phosphothreonine" evidence="9">
    <location>
        <position position="420"/>
    </location>
</feature>
<feature type="modified residue" description="Phosphoserine" evidence="1">
    <location>
        <position position="441"/>
    </location>
</feature>
<feature type="modified residue" description="Phosphoserine" evidence="9">
    <location>
        <position position="542"/>
    </location>
</feature>
<feature type="modified residue" description="Phosphoserine" evidence="8 9">
    <location>
        <position position="543"/>
    </location>
</feature>
<feature type="modified residue" description="Phosphoserine" evidence="8 9">
    <location>
        <position position="545"/>
    </location>
</feature>
<feature type="modified residue" description="Phosphothreonine" evidence="9">
    <location>
        <position position="548"/>
    </location>
</feature>
<feature type="modified residue" description="Phosphothreonine" evidence="1">
    <location>
        <position position="551"/>
    </location>
</feature>
<feature type="sequence variant" description="In strain: C57BL/6J." evidence="4">
    <original>Q</original>
    <variation>R</variation>
    <location>
        <position position="481"/>
    </location>
</feature>
<protein>
    <recommendedName>
        <fullName>mRNA-decapping enzyme 1A</fullName>
        <ecNumber evidence="1">3.6.1.62</ecNumber>
    </recommendedName>
    <alternativeName>
        <fullName>MAD homolog 4-interacting transcription coactivator 1</fullName>
    </alternativeName>
    <alternativeName>
        <fullName>Smad4-interacting transcriptional co-activator</fullName>
    </alternativeName>
    <alternativeName>
        <fullName>Transcription factor SMIF</fullName>
    </alternativeName>
</protein>
<keyword id="KW-0963">Cytoplasm</keyword>
<keyword id="KW-0378">Hydrolase</keyword>
<keyword id="KW-0488">Methylation</keyword>
<keyword id="KW-0866">Nonsense-mediated mRNA decay</keyword>
<keyword id="KW-0539">Nucleus</keyword>
<keyword id="KW-0597">Phosphoprotein</keyword>
<keyword id="KW-1185">Reference proteome</keyword>
<name>DCP1A_MOUSE</name>